<comment type="function">
    <text evidence="1">Involved in pyrimidine catabolism. Catalyzes the deamination of 3-aminoacrylate to malonic semialdehyde, a reaction that can also occur spontaneously. RutC may facilitate the reaction and modulate the metabolic fitness, rather than catalyzing essential functions.</text>
</comment>
<comment type="catalytic activity">
    <reaction evidence="1">
        <text>(Z)-3-aminoacrylate + H2O + H(+) = 3-oxopropanoate + NH4(+)</text>
        <dbReference type="Rhea" id="RHEA:34947"/>
        <dbReference type="ChEBI" id="CHEBI:15377"/>
        <dbReference type="ChEBI" id="CHEBI:15378"/>
        <dbReference type="ChEBI" id="CHEBI:28938"/>
        <dbReference type="ChEBI" id="CHEBI:33190"/>
        <dbReference type="ChEBI" id="CHEBI:59894"/>
    </reaction>
</comment>
<comment type="subunit">
    <text evidence="1">Homotrimer.</text>
</comment>
<comment type="similarity">
    <text evidence="1">Belongs to the RutC family.</text>
</comment>
<name>RUTC_ECO44</name>
<accession>D3H123</accession>
<organism>
    <name type="scientific">Escherichia coli O44:H18 (strain 042 / EAEC)</name>
    <dbReference type="NCBI Taxonomy" id="216592"/>
    <lineage>
        <taxon>Bacteria</taxon>
        <taxon>Pseudomonadati</taxon>
        <taxon>Pseudomonadota</taxon>
        <taxon>Gammaproteobacteria</taxon>
        <taxon>Enterobacterales</taxon>
        <taxon>Enterobacteriaceae</taxon>
        <taxon>Escherichia</taxon>
    </lineage>
</organism>
<evidence type="ECO:0000255" key="1">
    <source>
        <dbReference type="HAMAP-Rule" id="MF_00831"/>
    </source>
</evidence>
<protein>
    <recommendedName>
        <fullName evidence="1">3-aminoacrylate deaminase RutC</fullName>
        <shortName evidence="1">3-AA deaminase</shortName>
        <ecNumber evidence="1">3.5.-.-</ecNumber>
    </recommendedName>
</protein>
<dbReference type="EC" id="3.5.-.-" evidence="1"/>
<dbReference type="EMBL" id="FN554766">
    <property type="protein sequence ID" value="CBG33907.1"/>
    <property type="molecule type" value="Genomic_DNA"/>
</dbReference>
<dbReference type="RefSeq" id="WP_001126780.1">
    <property type="nucleotide sequence ID" value="NC_017626.1"/>
</dbReference>
<dbReference type="SMR" id="D3H123"/>
<dbReference type="GeneID" id="75171086"/>
<dbReference type="KEGG" id="elo:EC042_1085"/>
<dbReference type="PATRIC" id="fig|216592.3.peg.1123"/>
<dbReference type="HOGENOM" id="CLU_100715_7_3_6"/>
<dbReference type="Proteomes" id="UP000001407">
    <property type="component" value="Chromosome"/>
</dbReference>
<dbReference type="GO" id="GO:0005829">
    <property type="term" value="C:cytosol"/>
    <property type="evidence" value="ECO:0007669"/>
    <property type="project" value="TreeGrafter"/>
</dbReference>
<dbReference type="GO" id="GO:0019239">
    <property type="term" value="F:deaminase activity"/>
    <property type="evidence" value="ECO:0007669"/>
    <property type="project" value="TreeGrafter"/>
</dbReference>
<dbReference type="GO" id="GO:0019740">
    <property type="term" value="P:nitrogen utilization"/>
    <property type="evidence" value="ECO:0007669"/>
    <property type="project" value="UniProtKB-UniRule"/>
</dbReference>
<dbReference type="GO" id="GO:0006212">
    <property type="term" value="P:uracil catabolic process"/>
    <property type="evidence" value="ECO:0007669"/>
    <property type="project" value="UniProtKB-UniRule"/>
</dbReference>
<dbReference type="CDD" id="cd00448">
    <property type="entry name" value="YjgF_YER057c_UK114_family"/>
    <property type="match status" value="1"/>
</dbReference>
<dbReference type="FunFam" id="3.30.1330.40:FF:000003">
    <property type="entry name" value="Putative aminoacrylate peracid reductase RutC"/>
    <property type="match status" value="1"/>
</dbReference>
<dbReference type="Gene3D" id="3.30.1330.40">
    <property type="entry name" value="RutC-like"/>
    <property type="match status" value="1"/>
</dbReference>
<dbReference type="HAMAP" id="MF_00831">
    <property type="entry name" value="RutC"/>
    <property type="match status" value="1"/>
</dbReference>
<dbReference type="InterPro" id="IPR019897">
    <property type="entry name" value="RidA_CS"/>
</dbReference>
<dbReference type="InterPro" id="IPR019898">
    <property type="entry name" value="RutC"/>
</dbReference>
<dbReference type="InterPro" id="IPR035959">
    <property type="entry name" value="RutC-like_sf"/>
</dbReference>
<dbReference type="InterPro" id="IPR006175">
    <property type="entry name" value="YjgF/YER057c/UK114"/>
</dbReference>
<dbReference type="NCBIfam" id="TIGR03610">
    <property type="entry name" value="RutC"/>
    <property type="match status" value="1"/>
</dbReference>
<dbReference type="PANTHER" id="PTHR11803">
    <property type="entry name" value="2-IMINOBUTANOATE/2-IMINOPROPANOATE DEAMINASE RIDA"/>
    <property type="match status" value="1"/>
</dbReference>
<dbReference type="PANTHER" id="PTHR11803:SF58">
    <property type="entry name" value="PROTEIN HMF1-RELATED"/>
    <property type="match status" value="1"/>
</dbReference>
<dbReference type="Pfam" id="PF01042">
    <property type="entry name" value="Ribonuc_L-PSP"/>
    <property type="match status" value="1"/>
</dbReference>
<dbReference type="SUPFAM" id="SSF55298">
    <property type="entry name" value="YjgF-like"/>
    <property type="match status" value="1"/>
</dbReference>
<dbReference type="PROSITE" id="PS01094">
    <property type="entry name" value="UPF0076"/>
    <property type="match status" value="1"/>
</dbReference>
<keyword id="KW-0378">Hydrolase</keyword>
<proteinExistence type="inferred from homology"/>
<sequence>MPKSVIIPAGSSAPLAPFVPGTLADGVVYVSGTLAFDQHNNVLFADDPKAQTRHVLETIRKVIETAGGTMADVTFNSIFITDWKNYAAINEIYAEFFPGDKPARFCIQCGLVKPDALVEIATIAHIAK</sequence>
<reference key="1">
    <citation type="journal article" date="2010" name="PLoS ONE">
        <title>Complete genome sequence and comparative metabolic profiling of the prototypical enteroaggregative Escherichia coli strain 042.</title>
        <authorList>
            <person name="Chaudhuri R.R."/>
            <person name="Sebaihia M."/>
            <person name="Hobman J.L."/>
            <person name="Webber M.A."/>
            <person name="Leyton D.L."/>
            <person name="Goldberg M.D."/>
            <person name="Cunningham A.F."/>
            <person name="Scott-Tucker A."/>
            <person name="Ferguson P.R."/>
            <person name="Thomas C.M."/>
            <person name="Frankel G."/>
            <person name="Tang C.M."/>
            <person name="Dudley E.G."/>
            <person name="Roberts I.S."/>
            <person name="Rasko D.A."/>
            <person name="Pallen M.J."/>
            <person name="Parkhill J."/>
            <person name="Nataro J.P."/>
            <person name="Thomson N.R."/>
            <person name="Henderson I.R."/>
        </authorList>
    </citation>
    <scope>NUCLEOTIDE SEQUENCE [LARGE SCALE GENOMIC DNA]</scope>
    <source>
        <strain>042 / EAEC</strain>
    </source>
</reference>
<feature type="chain" id="PRO_0000402742" description="3-aminoacrylate deaminase RutC">
    <location>
        <begin position="1"/>
        <end position="128"/>
    </location>
</feature>
<gene>
    <name evidence="1" type="primary">rutC</name>
    <name type="ordered locus">EC042_1085</name>
</gene>